<organism>
    <name type="scientific">Rhizobium meliloti (strain 1021)</name>
    <name type="common">Ensifer meliloti</name>
    <name type="synonym">Sinorhizobium meliloti</name>
    <dbReference type="NCBI Taxonomy" id="266834"/>
    <lineage>
        <taxon>Bacteria</taxon>
        <taxon>Pseudomonadati</taxon>
        <taxon>Pseudomonadota</taxon>
        <taxon>Alphaproteobacteria</taxon>
        <taxon>Hyphomicrobiales</taxon>
        <taxon>Rhizobiaceae</taxon>
        <taxon>Sinorhizobium/Ensifer group</taxon>
        <taxon>Sinorhizobium</taxon>
    </lineage>
</organism>
<comment type="function">
    <text>Responsible for the transport of dicarboxylates such as succinate, fumarate, and malate from the periplasm across the inner membrane. This transport system plays an important role in the energy supply of rhizobium-legume symbionts.</text>
</comment>
<comment type="subcellular location">
    <subcellularLocation>
        <location>Cell inner membrane</location>
        <topology>Multi-pass membrane protein</topology>
    </subcellularLocation>
</comment>
<comment type="induction">
    <text>By succinate, fumarate, and malate.</text>
</comment>
<comment type="similarity">
    <text evidence="2">Belongs to the dicarboxylate/amino acid:cation symporter (DAACS) (TC 2.A.23) family.</text>
</comment>
<comment type="caution">
    <text evidence="2">The topology shown here is that reported by PubMed:8232193. It contradicts that predicted by TM prediction programs and which has been used in orthologous entries.</text>
</comment>
<comment type="sequence caution" evidence="2">
    <conflict type="erroneous initiation">
        <sequence resource="EMBL-CDS" id="AAA26252"/>
    </conflict>
</comment>
<comment type="sequence caution" evidence="2">
    <conflict type="erroneous initiation">
        <sequence resource="EMBL-CDS" id="AAA63509"/>
    </conflict>
</comment>
<gene>
    <name type="primary">dctA</name>
    <name type="ordered locus">RB1523</name>
    <name type="ORF">SMb20611</name>
</gene>
<dbReference type="EMBL" id="M26531">
    <property type="protein sequence ID" value="AAA26248.1"/>
    <property type="molecule type" value="Genomic_DNA"/>
</dbReference>
<dbReference type="EMBL" id="M26399">
    <property type="protein sequence ID" value="AAA26253.1"/>
    <property type="molecule type" value="Genomic_DNA"/>
</dbReference>
<dbReference type="EMBL" id="M26399">
    <property type="protein sequence ID" value="AAA26252.1"/>
    <property type="status" value="ALT_INIT"/>
    <property type="molecule type" value="Genomic_DNA"/>
</dbReference>
<dbReference type="EMBL" id="J03683">
    <property type="protein sequence ID" value="AAA63508.1"/>
    <property type="molecule type" value="Genomic_DNA"/>
</dbReference>
<dbReference type="EMBL" id="J03683">
    <property type="protein sequence ID" value="AAA63509.1"/>
    <property type="status" value="ALT_INIT"/>
    <property type="molecule type" value="Genomic_DNA"/>
</dbReference>
<dbReference type="EMBL" id="AL591985">
    <property type="protein sequence ID" value="CAC49923.1"/>
    <property type="molecule type" value="Genomic_DNA"/>
</dbReference>
<dbReference type="PIR" id="A33597">
    <property type="entry name" value="A33597"/>
</dbReference>
<dbReference type="PIR" id="C96032">
    <property type="entry name" value="C96032"/>
</dbReference>
<dbReference type="RefSeq" id="NP_438063.1">
    <property type="nucleotide sequence ID" value="NC_003078.1"/>
</dbReference>
<dbReference type="RefSeq" id="WP_010976308.1">
    <property type="nucleotide sequence ID" value="NC_003078.1"/>
</dbReference>
<dbReference type="SMR" id="P20672"/>
<dbReference type="EnsemblBacteria" id="CAC49923">
    <property type="protein sequence ID" value="CAC49923"/>
    <property type="gene ID" value="SM_b20611"/>
</dbReference>
<dbReference type="KEGG" id="sme:SM_b20611"/>
<dbReference type="PATRIC" id="fig|266834.11.peg.6446"/>
<dbReference type="eggNOG" id="COG1301">
    <property type="taxonomic scope" value="Bacteria"/>
</dbReference>
<dbReference type="HOGENOM" id="CLU_019375_7_0_5"/>
<dbReference type="OrthoDB" id="9766690at2"/>
<dbReference type="PRO" id="PR:P20672"/>
<dbReference type="Proteomes" id="UP000001976">
    <property type="component" value="Plasmid pSymB"/>
</dbReference>
<dbReference type="GO" id="GO:0005886">
    <property type="term" value="C:plasma membrane"/>
    <property type="evidence" value="ECO:0007669"/>
    <property type="project" value="UniProtKB-SubCell"/>
</dbReference>
<dbReference type="GO" id="GO:0015138">
    <property type="term" value="F:fumarate transmembrane transporter activity"/>
    <property type="evidence" value="ECO:0007669"/>
    <property type="project" value="TreeGrafter"/>
</dbReference>
<dbReference type="GO" id="GO:0015366">
    <property type="term" value="F:malate:proton symporter activity"/>
    <property type="evidence" value="ECO:0007669"/>
    <property type="project" value="TreeGrafter"/>
</dbReference>
<dbReference type="GO" id="GO:0015141">
    <property type="term" value="F:succinate transmembrane transporter activity"/>
    <property type="evidence" value="ECO:0007669"/>
    <property type="project" value="TreeGrafter"/>
</dbReference>
<dbReference type="GO" id="GO:0070778">
    <property type="term" value="P:L-aspartate transmembrane transport"/>
    <property type="evidence" value="ECO:0007669"/>
    <property type="project" value="TreeGrafter"/>
</dbReference>
<dbReference type="FunFam" id="1.10.3860.10:FF:000001">
    <property type="entry name" value="C4-dicarboxylate transport protein"/>
    <property type="match status" value="1"/>
</dbReference>
<dbReference type="Gene3D" id="1.10.3860.10">
    <property type="entry name" value="Sodium:dicarboxylate symporter"/>
    <property type="match status" value="1"/>
</dbReference>
<dbReference type="HAMAP" id="MF_01300">
    <property type="entry name" value="C4_dicarb_transport"/>
    <property type="match status" value="1"/>
</dbReference>
<dbReference type="InterPro" id="IPR023954">
    <property type="entry name" value="C4_dicarb_transport"/>
</dbReference>
<dbReference type="InterPro" id="IPR001991">
    <property type="entry name" value="Na-dicarboxylate_symporter"/>
</dbReference>
<dbReference type="InterPro" id="IPR018107">
    <property type="entry name" value="Na-dicarboxylate_symporter_CS"/>
</dbReference>
<dbReference type="InterPro" id="IPR036458">
    <property type="entry name" value="Na:dicarbo_symporter_sf"/>
</dbReference>
<dbReference type="NCBIfam" id="NF002461">
    <property type="entry name" value="PRK01663.1"/>
    <property type="match status" value="1"/>
</dbReference>
<dbReference type="NCBIfam" id="NF009587">
    <property type="entry name" value="PRK13027.1"/>
    <property type="match status" value="1"/>
</dbReference>
<dbReference type="PANTHER" id="PTHR42865:SF1">
    <property type="entry name" value="AEROBIC C4-DICARBOXYLATE TRANSPORT PROTEIN"/>
    <property type="match status" value="1"/>
</dbReference>
<dbReference type="PANTHER" id="PTHR42865">
    <property type="entry name" value="PROTON/GLUTAMATE-ASPARTATE SYMPORTER"/>
    <property type="match status" value="1"/>
</dbReference>
<dbReference type="Pfam" id="PF00375">
    <property type="entry name" value="SDF"/>
    <property type="match status" value="1"/>
</dbReference>
<dbReference type="PRINTS" id="PR00173">
    <property type="entry name" value="EDTRNSPORT"/>
</dbReference>
<dbReference type="SUPFAM" id="SSF118215">
    <property type="entry name" value="Proton glutamate symport protein"/>
    <property type="match status" value="1"/>
</dbReference>
<dbReference type="PROSITE" id="PS00713">
    <property type="entry name" value="NA_DICARBOXYL_SYMP_1"/>
    <property type="match status" value="1"/>
</dbReference>
<dbReference type="PROSITE" id="PS00714">
    <property type="entry name" value="NA_DICARBOXYL_SYMP_2"/>
    <property type="match status" value="1"/>
</dbReference>
<reference key="1">
    <citation type="journal article" date="1989" name="J. Bacteriol.">
        <title>Conservation between coding and regulatory elements of Rhizobium meliloti and Rhizobium leguminosarum dct genes.</title>
        <authorList>
            <person name="Jiang J."/>
            <person name="Gu B."/>
            <person name="Albright L.M."/>
            <person name="Nixon B.T."/>
        </authorList>
    </citation>
    <scope>NUCLEOTIDE SEQUENCE [GENOMIC DNA]</scope>
    <source>
        <strain>1021</strain>
    </source>
</reference>
<reference key="2">
    <citation type="journal article" date="1989" name="J. Bacteriol.">
        <title>Identification and sequence analysis of the Rhizobium meliloti dctA gene encoding the C4-dicarboxylate carrier.</title>
        <authorList>
            <person name="Engelke T."/>
            <person name="Jording D."/>
            <person name="Kapp D."/>
            <person name="Puehler A."/>
        </authorList>
    </citation>
    <scope>NUCLEOTIDE SEQUENCE [GENOMIC DNA]</scope>
    <source>
        <strain>RCR2011 / SU47</strain>
    </source>
</reference>
<reference key="3">
    <citation type="journal article" date="1990" name="Mol. Plant Microbe Interact.">
        <title>Analysis of the C4-dicarboxylate transport genes of Rhizobium meliloti: nucleotide sequence and deduced products of dctA, dctB, and dctD.</title>
        <authorList>
            <person name="Watson R.J."/>
        </authorList>
    </citation>
    <scope>NUCLEOTIDE SEQUENCE [GENOMIC DNA]</scope>
    <source>
        <strain>JJ1c10</strain>
    </source>
</reference>
<reference key="4">
    <citation type="journal article" date="2001" name="Proc. Natl. Acad. Sci. U.S.A.">
        <title>The complete sequence of the 1,683-kb pSymB megaplasmid from the N2-fixing endosymbiont Sinorhizobium meliloti.</title>
        <authorList>
            <person name="Finan T.M."/>
            <person name="Weidner S."/>
            <person name="Wong K."/>
            <person name="Buhrmester J."/>
            <person name="Chain P."/>
            <person name="Vorhoelter F.J."/>
            <person name="Hernandez-Lucas I."/>
            <person name="Becker A."/>
            <person name="Cowie A."/>
            <person name="Gouzy J."/>
            <person name="Golding B."/>
            <person name="Puehler A."/>
        </authorList>
    </citation>
    <scope>NUCLEOTIDE SEQUENCE [LARGE SCALE GENOMIC DNA]</scope>
    <source>
        <strain>1021</strain>
    </source>
</reference>
<reference key="5">
    <citation type="journal article" date="2001" name="Science">
        <title>The composite genome of the legume symbiont Sinorhizobium meliloti.</title>
        <authorList>
            <person name="Galibert F."/>
            <person name="Finan T.M."/>
            <person name="Long S.R."/>
            <person name="Puehler A."/>
            <person name="Abola P."/>
            <person name="Ampe F."/>
            <person name="Barloy-Hubler F."/>
            <person name="Barnett M.J."/>
            <person name="Becker A."/>
            <person name="Boistard P."/>
            <person name="Bothe G."/>
            <person name="Boutry M."/>
            <person name="Bowser L."/>
            <person name="Buhrmester J."/>
            <person name="Cadieu E."/>
            <person name="Capela D."/>
            <person name="Chain P."/>
            <person name="Cowie A."/>
            <person name="Davis R.W."/>
            <person name="Dreano S."/>
            <person name="Federspiel N.A."/>
            <person name="Fisher R.F."/>
            <person name="Gloux S."/>
            <person name="Godrie T."/>
            <person name="Goffeau A."/>
            <person name="Golding B."/>
            <person name="Gouzy J."/>
            <person name="Gurjal M."/>
            <person name="Hernandez-Lucas I."/>
            <person name="Hong A."/>
            <person name="Huizar L."/>
            <person name="Hyman R.W."/>
            <person name="Jones T."/>
            <person name="Kahn D."/>
            <person name="Kahn M.L."/>
            <person name="Kalman S."/>
            <person name="Keating D.H."/>
            <person name="Kiss E."/>
            <person name="Komp C."/>
            <person name="Lelaure V."/>
            <person name="Masuy D."/>
            <person name="Palm C."/>
            <person name="Peck M.C."/>
            <person name="Pohl T.M."/>
            <person name="Portetelle D."/>
            <person name="Purnelle B."/>
            <person name="Ramsperger U."/>
            <person name="Surzycki R."/>
            <person name="Thebault P."/>
            <person name="Vandenbol M."/>
            <person name="Vorhoelter F.J."/>
            <person name="Weidner S."/>
            <person name="Wells D.H."/>
            <person name="Wong K."/>
            <person name="Yeh K.-C."/>
            <person name="Batut J."/>
        </authorList>
    </citation>
    <scope>NUCLEOTIDE SEQUENCE [LARGE SCALE GENOMIC DNA]</scope>
    <source>
        <strain>1021</strain>
    </source>
</reference>
<reference key="6">
    <citation type="journal article" date="1993" name="Mol. Gen. Genet.">
        <title>The membrane topology of the Rhizobium meliloti C4-dicarboxylate permease (DctA) as derived from protein fusions with Escherichia coli K12 alkaline phosphatase (PhoA) and beta-galactosidase (LacZ).</title>
        <authorList>
            <person name="Jording D."/>
            <person name="Puehler A."/>
        </authorList>
    </citation>
    <scope>TOPOLOGY</scope>
</reference>
<feature type="chain" id="PRO_0000202109" description="C4-dicarboxylate transport protein">
    <location>
        <begin position="1"/>
        <end position="441"/>
    </location>
</feature>
<feature type="topological domain" description="Cytoplasmic" evidence="1">
    <location>
        <begin position="1"/>
        <end position="30"/>
    </location>
</feature>
<feature type="transmembrane region" description="Helical; Name=1">
    <location>
        <begin position="31"/>
        <end position="49"/>
    </location>
</feature>
<feature type="topological domain" description="Periplasmic" evidence="1">
    <location>
        <begin position="50"/>
        <end position="68"/>
    </location>
</feature>
<feature type="transmembrane region" description="Helical; Name=2">
    <location>
        <begin position="69"/>
        <end position="87"/>
    </location>
</feature>
<feature type="topological domain" description="Cytoplasmic" evidence="1">
    <location>
        <begin position="88"/>
        <end position="99"/>
    </location>
</feature>
<feature type="transmembrane region" description="Helical; Name=3">
    <location>
        <begin position="100"/>
        <end position="118"/>
    </location>
</feature>
<feature type="topological domain" description="Periplasmic" evidence="1">
    <location>
        <begin position="119"/>
        <end position="149"/>
    </location>
</feature>
<feature type="transmembrane region" description="Helical; Name=4">
    <location>
        <begin position="150"/>
        <end position="168"/>
    </location>
</feature>
<feature type="topological domain" description="Cytoplasmic" evidence="1">
    <location>
        <begin position="169"/>
        <end position="171"/>
    </location>
</feature>
<feature type="transmembrane region" description="Helical; Name=5">
    <location>
        <begin position="172"/>
        <end position="190"/>
    </location>
</feature>
<feature type="topological domain" description="Periplasmic" evidence="1">
    <location>
        <begin position="191"/>
        <end position="209"/>
    </location>
</feature>
<feature type="transmembrane region" description="Helical; Name=6">
    <location>
        <begin position="210"/>
        <end position="228"/>
    </location>
</feature>
<feature type="topological domain" description="Cytoplasmic" evidence="1">
    <location>
        <begin position="229"/>
        <end position="241"/>
    </location>
</feature>
<feature type="transmembrane region" description="Helical; Name=7">
    <location>
        <begin position="242"/>
        <end position="260"/>
    </location>
</feature>
<feature type="topological domain" description="Periplasmic" evidence="1">
    <location>
        <begin position="261"/>
        <end position="281"/>
    </location>
</feature>
<feature type="transmembrane region" description="Helical; Name=8">
    <location>
        <begin position="282"/>
        <end position="300"/>
    </location>
</feature>
<feature type="topological domain" description="Cytoplasmic" evidence="1">
    <location>
        <begin position="301"/>
        <end position="320"/>
    </location>
</feature>
<feature type="transmembrane region" description="Helical; Name=9">
    <location>
        <begin position="321"/>
        <end position="339"/>
    </location>
</feature>
<feature type="topological domain" description="Periplasmic" evidence="1">
    <location>
        <begin position="340"/>
        <end position="350"/>
    </location>
</feature>
<feature type="transmembrane region" description="Helical; Name=10">
    <location>
        <begin position="351"/>
        <end position="369"/>
    </location>
</feature>
<feature type="topological domain" description="Cytoplasmic" evidence="1">
    <location>
        <begin position="370"/>
        <end position="378"/>
    </location>
</feature>
<feature type="transmembrane region" description="Helical; Name=11">
    <location>
        <begin position="379"/>
        <end position="398"/>
    </location>
</feature>
<feature type="topological domain" description="Periplasmic" evidence="1">
    <location>
        <begin position="399"/>
        <end position="405"/>
    </location>
</feature>
<feature type="transmembrane region" description="Helical; Name=12">
    <location>
        <begin position="406"/>
        <end position="424"/>
    </location>
</feature>
<feature type="topological domain" description="Cytoplasmic" evidence="1">
    <location>
        <begin position="425"/>
        <end position="441"/>
    </location>
</feature>
<evidence type="ECO:0000269" key="1">
    <source>
    </source>
</evidence>
<evidence type="ECO:0000305" key="2"/>
<protein>
    <recommendedName>
        <fullName>C4-dicarboxylate transport protein</fullName>
    </recommendedName>
</protein>
<accession>P20672</accession>
<proteinExistence type="evidence at protein level"/>
<name>DCTA_RHIME</name>
<geneLocation type="plasmid">
    <name>pSymB</name>
    <name>megaplasmid 2</name>
</geneLocation>
<keyword id="KW-0997">Cell inner membrane</keyword>
<keyword id="KW-1003">Cell membrane</keyword>
<keyword id="KW-0472">Membrane</keyword>
<keyword id="KW-0614">Plasmid</keyword>
<keyword id="KW-1185">Reference proteome</keyword>
<keyword id="KW-0769">Symport</keyword>
<keyword id="KW-0812">Transmembrane</keyword>
<keyword id="KW-1133">Transmembrane helix</keyword>
<keyword id="KW-0813">Transport</keyword>
<sequence length="441" mass="46143">MIIEHSAEVRGKTPLYRHLYVQVLAAIAAGILLGHFYPDIGTELKPLGDAFIRLVKMIIAPVIFLTVATGIAGMTDLAKVGRVAGKAMIYFLAFSTLALVVGLVVANVVQPGAGMHIDPASLDAKAVATYAEKAHEQSITGFLMNIIPTTLVGAFAEGDILQVLFISVLFGISLAIVGKKAEPVVDFLQALTLPIFRLVAILMKAAPIGAFGAMAFTIGKYGIASIANLAMLIGTFYLTSFLFVFIVLGAVARYNGFSILSLIRYIKEELLLVLGTSSSEAALPGLMNKMEKAGCKRSVVGLVIPTGYSFNLDGTNIYMTLAALFIAQATDTPLSYGDQILLLLVAMLSSKGAAGITGAGFITLAATLSVVPSVPVAGMALILGIDRFMSECRALTNFVGNAVATIVVAKWEGELDQAQLSAALGGEASVEAIPAVVQPAE</sequence>